<accession>Q4FQ36</accession>
<gene>
    <name evidence="1" type="primary">atpG</name>
    <name type="ordered locus">Psyc_2025</name>
</gene>
<organism>
    <name type="scientific">Psychrobacter arcticus (strain DSM 17307 / VKM B-2377 / 273-4)</name>
    <dbReference type="NCBI Taxonomy" id="259536"/>
    <lineage>
        <taxon>Bacteria</taxon>
        <taxon>Pseudomonadati</taxon>
        <taxon>Pseudomonadota</taxon>
        <taxon>Gammaproteobacteria</taxon>
        <taxon>Moraxellales</taxon>
        <taxon>Moraxellaceae</taxon>
        <taxon>Psychrobacter</taxon>
    </lineage>
</organism>
<name>ATPG_PSYA2</name>
<keyword id="KW-0066">ATP synthesis</keyword>
<keyword id="KW-0997">Cell inner membrane</keyword>
<keyword id="KW-1003">Cell membrane</keyword>
<keyword id="KW-0139">CF(1)</keyword>
<keyword id="KW-0375">Hydrogen ion transport</keyword>
<keyword id="KW-0406">Ion transport</keyword>
<keyword id="KW-0472">Membrane</keyword>
<keyword id="KW-1185">Reference proteome</keyword>
<keyword id="KW-0813">Transport</keyword>
<sequence length="293" mass="32598">MASLKEIRAKVTSIKSTQKITRAMQMVAASKMRRAQERMEVGRPYADSMRRVISHLVHASSDYKHPYMVNRPVNKVGYIVITSDRGLAGGLNINLFKALTKSIQQYQDQSVQAEFAVIGAKGVSFFKNFGGKVTSAVTDYGDKPTFEQLNSPVQAMLEDYSNGKIDRIYVVYNKFVNAMTQKPTINQLVPLPDSAFAEEESGIQTELSWDYIYEPDIKTLIDELLGRYIESIVYQAVMENIASEQSSRMVAMKAATDNAGDLINDLQLVYNKLRQAAITREISEIVGGAAAVS</sequence>
<proteinExistence type="inferred from homology"/>
<comment type="function">
    <text evidence="1">Produces ATP from ADP in the presence of a proton gradient across the membrane. The gamma chain is believed to be important in regulating ATPase activity and the flow of protons through the CF(0) complex.</text>
</comment>
<comment type="subunit">
    <text evidence="1">F-type ATPases have 2 components, CF(1) - the catalytic core - and CF(0) - the membrane proton channel. CF(1) has five subunits: alpha(3), beta(3), gamma(1), delta(1), epsilon(1). CF(0) has three main subunits: a, b and c.</text>
</comment>
<comment type="subcellular location">
    <subcellularLocation>
        <location evidence="1">Cell inner membrane</location>
        <topology evidence="1">Peripheral membrane protein</topology>
    </subcellularLocation>
</comment>
<comment type="similarity">
    <text evidence="1">Belongs to the ATPase gamma chain family.</text>
</comment>
<evidence type="ECO:0000255" key="1">
    <source>
        <dbReference type="HAMAP-Rule" id="MF_00815"/>
    </source>
</evidence>
<feature type="chain" id="PRO_0000073351" description="ATP synthase gamma chain">
    <location>
        <begin position="1"/>
        <end position="293"/>
    </location>
</feature>
<reference key="1">
    <citation type="journal article" date="2010" name="Appl. Environ. Microbiol.">
        <title>The genome sequence of Psychrobacter arcticus 273-4, a psychroactive Siberian permafrost bacterium, reveals mechanisms for adaptation to low-temperature growth.</title>
        <authorList>
            <person name="Ayala-del-Rio H.L."/>
            <person name="Chain P.S."/>
            <person name="Grzymski J.J."/>
            <person name="Ponder M.A."/>
            <person name="Ivanova N."/>
            <person name="Bergholz P.W."/>
            <person name="Di Bartolo G."/>
            <person name="Hauser L."/>
            <person name="Land M."/>
            <person name="Bakermans C."/>
            <person name="Rodrigues D."/>
            <person name="Klappenbach J."/>
            <person name="Zarka D."/>
            <person name="Larimer F."/>
            <person name="Richardson P."/>
            <person name="Murray A."/>
            <person name="Thomashow M."/>
            <person name="Tiedje J.M."/>
        </authorList>
    </citation>
    <scope>NUCLEOTIDE SEQUENCE [LARGE SCALE GENOMIC DNA]</scope>
    <source>
        <strain>DSM 17307 / VKM B-2377 / 273-4</strain>
    </source>
</reference>
<dbReference type="EMBL" id="CP000082">
    <property type="protein sequence ID" value="AAZ19872.1"/>
    <property type="molecule type" value="Genomic_DNA"/>
</dbReference>
<dbReference type="RefSeq" id="WP_011281280.1">
    <property type="nucleotide sequence ID" value="NC_007204.1"/>
</dbReference>
<dbReference type="SMR" id="Q4FQ36"/>
<dbReference type="STRING" id="259536.Psyc_2025"/>
<dbReference type="KEGG" id="par:Psyc_2025"/>
<dbReference type="eggNOG" id="COG0224">
    <property type="taxonomic scope" value="Bacteria"/>
</dbReference>
<dbReference type="HOGENOM" id="CLU_050669_0_1_6"/>
<dbReference type="OrthoDB" id="9812769at2"/>
<dbReference type="Proteomes" id="UP000000546">
    <property type="component" value="Chromosome"/>
</dbReference>
<dbReference type="GO" id="GO:0005886">
    <property type="term" value="C:plasma membrane"/>
    <property type="evidence" value="ECO:0007669"/>
    <property type="project" value="UniProtKB-SubCell"/>
</dbReference>
<dbReference type="GO" id="GO:0045259">
    <property type="term" value="C:proton-transporting ATP synthase complex"/>
    <property type="evidence" value="ECO:0007669"/>
    <property type="project" value="UniProtKB-KW"/>
</dbReference>
<dbReference type="GO" id="GO:0005524">
    <property type="term" value="F:ATP binding"/>
    <property type="evidence" value="ECO:0007669"/>
    <property type="project" value="UniProtKB-UniRule"/>
</dbReference>
<dbReference type="GO" id="GO:0046933">
    <property type="term" value="F:proton-transporting ATP synthase activity, rotational mechanism"/>
    <property type="evidence" value="ECO:0007669"/>
    <property type="project" value="UniProtKB-UniRule"/>
</dbReference>
<dbReference type="GO" id="GO:0042777">
    <property type="term" value="P:proton motive force-driven plasma membrane ATP synthesis"/>
    <property type="evidence" value="ECO:0007669"/>
    <property type="project" value="UniProtKB-UniRule"/>
</dbReference>
<dbReference type="CDD" id="cd12151">
    <property type="entry name" value="F1-ATPase_gamma"/>
    <property type="match status" value="1"/>
</dbReference>
<dbReference type="FunFam" id="1.10.287.80:FF:000005">
    <property type="entry name" value="ATP synthase gamma chain"/>
    <property type="match status" value="1"/>
</dbReference>
<dbReference type="Gene3D" id="3.40.1380.10">
    <property type="match status" value="1"/>
</dbReference>
<dbReference type="Gene3D" id="1.10.287.80">
    <property type="entry name" value="ATP synthase, gamma subunit, helix hairpin domain"/>
    <property type="match status" value="2"/>
</dbReference>
<dbReference type="HAMAP" id="MF_00815">
    <property type="entry name" value="ATP_synth_gamma_bact"/>
    <property type="match status" value="1"/>
</dbReference>
<dbReference type="InterPro" id="IPR035968">
    <property type="entry name" value="ATP_synth_F1_ATPase_gsu"/>
</dbReference>
<dbReference type="InterPro" id="IPR000131">
    <property type="entry name" value="ATP_synth_F1_gsu"/>
</dbReference>
<dbReference type="InterPro" id="IPR023632">
    <property type="entry name" value="ATP_synth_F1_gsu_CS"/>
</dbReference>
<dbReference type="NCBIfam" id="TIGR01146">
    <property type="entry name" value="ATPsyn_F1gamma"/>
    <property type="match status" value="1"/>
</dbReference>
<dbReference type="NCBIfam" id="NF004144">
    <property type="entry name" value="PRK05621.1-1"/>
    <property type="match status" value="1"/>
</dbReference>
<dbReference type="PANTHER" id="PTHR11693">
    <property type="entry name" value="ATP SYNTHASE GAMMA CHAIN"/>
    <property type="match status" value="1"/>
</dbReference>
<dbReference type="PANTHER" id="PTHR11693:SF22">
    <property type="entry name" value="ATP SYNTHASE SUBUNIT GAMMA, MITOCHONDRIAL"/>
    <property type="match status" value="1"/>
</dbReference>
<dbReference type="Pfam" id="PF00231">
    <property type="entry name" value="ATP-synt"/>
    <property type="match status" value="1"/>
</dbReference>
<dbReference type="PRINTS" id="PR00126">
    <property type="entry name" value="ATPASEGAMMA"/>
</dbReference>
<dbReference type="SUPFAM" id="SSF52943">
    <property type="entry name" value="ATP synthase (F1-ATPase), gamma subunit"/>
    <property type="match status" value="1"/>
</dbReference>
<dbReference type="PROSITE" id="PS00153">
    <property type="entry name" value="ATPASE_GAMMA"/>
    <property type="match status" value="1"/>
</dbReference>
<protein>
    <recommendedName>
        <fullName evidence="1">ATP synthase gamma chain</fullName>
    </recommendedName>
    <alternativeName>
        <fullName evidence="1">ATP synthase F1 sector gamma subunit</fullName>
    </alternativeName>
    <alternativeName>
        <fullName evidence="1">F-ATPase gamma subunit</fullName>
    </alternativeName>
</protein>